<keyword id="KW-0963">Cytoplasm</keyword>
<keyword id="KW-0238">DNA-binding</keyword>
<keyword id="KW-0678">Repressor</keyword>
<keyword id="KW-0804">Transcription</keyword>
<keyword id="KW-0805">Transcription regulation</keyword>
<proteinExistence type="inferred from homology"/>
<protein>
    <recommendedName>
        <fullName evidence="1">Trp operon repressor</fullName>
    </recommendedName>
</protein>
<accession>B5Y266</accession>
<gene>
    <name evidence="1" type="primary">trpR</name>
    <name type="ordered locus">KPK_4765</name>
</gene>
<comment type="function">
    <text evidence="1">This protein is an aporepressor. When complexed with L-tryptophan it binds the operator region of the trp operon (5'-ACTAGT-'3') and prevents the initiation of transcription. The complex also regulates trp repressor biosynthesis by binding to its regulatory region.</text>
</comment>
<comment type="subunit">
    <text evidence="1">Homodimer.</text>
</comment>
<comment type="subcellular location">
    <subcellularLocation>
        <location evidence="1">Cytoplasm</location>
    </subcellularLocation>
</comment>
<comment type="similarity">
    <text evidence="1">Belongs to the TrpR family.</text>
</comment>
<name>TRPR_KLEP3</name>
<evidence type="ECO:0000255" key="1">
    <source>
        <dbReference type="HAMAP-Rule" id="MF_00475"/>
    </source>
</evidence>
<feature type="chain" id="PRO_1000197150" description="Trp operon repressor">
    <location>
        <begin position="1"/>
        <end position="109"/>
    </location>
</feature>
<feature type="DNA-binding region" evidence="1">
    <location>
        <begin position="68"/>
        <end position="91"/>
    </location>
</feature>
<dbReference type="EMBL" id="CP000964">
    <property type="protein sequence ID" value="ACI08927.1"/>
    <property type="molecule type" value="Genomic_DNA"/>
</dbReference>
<dbReference type="SMR" id="B5Y266"/>
<dbReference type="KEGG" id="kpe:KPK_4765"/>
<dbReference type="HOGENOM" id="CLU_147939_0_0_6"/>
<dbReference type="Proteomes" id="UP000001734">
    <property type="component" value="Chromosome"/>
</dbReference>
<dbReference type="GO" id="GO:0005737">
    <property type="term" value="C:cytoplasm"/>
    <property type="evidence" value="ECO:0007669"/>
    <property type="project" value="UniProtKB-SubCell"/>
</dbReference>
<dbReference type="GO" id="GO:0003700">
    <property type="term" value="F:DNA-binding transcription factor activity"/>
    <property type="evidence" value="ECO:0007669"/>
    <property type="project" value="InterPro"/>
</dbReference>
<dbReference type="GO" id="GO:0043565">
    <property type="term" value="F:sequence-specific DNA binding"/>
    <property type="evidence" value="ECO:0007669"/>
    <property type="project" value="InterPro"/>
</dbReference>
<dbReference type="GO" id="GO:0045892">
    <property type="term" value="P:negative regulation of DNA-templated transcription"/>
    <property type="evidence" value="ECO:0007669"/>
    <property type="project" value="UniProtKB-UniRule"/>
</dbReference>
<dbReference type="FunFam" id="1.10.1270.10:FF:000001">
    <property type="entry name" value="Trp operon repressor"/>
    <property type="match status" value="1"/>
</dbReference>
<dbReference type="Gene3D" id="1.10.1270.10">
    <property type="entry name" value="TrpR-like"/>
    <property type="match status" value="1"/>
</dbReference>
<dbReference type="HAMAP" id="MF_00475">
    <property type="entry name" value="Trp_repressor"/>
    <property type="match status" value="1"/>
</dbReference>
<dbReference type="InterPro" id="IPR000831">
    <property type="entry name" value="Trp_repress"/>
</dbReference>
<dbReference type="InterPro" id="IPR013335">
    <property type="entry name" value="Trp_repress_bac"/>
</dbReference>
<dbReference type="InterPro" id="IPR010921">
    <property type="entry name" value="Trp_repressor/repl_initiator"/>
</dbReference>
<dbReference type="InterPro" id="IPR038116">
    <property type="entry name" value="TrpR-like_sf"/>
</dbReference>
<dbReference type="NCBIfam" id="TIGR01321">
    <property type="entry name" value="TrpR"/>
    <property type="match status" value="1"/>
</dbReference>
<dbReference type="PANTHER" id="PTHR38025">
    <property type="entry name" value="TRP OPERON REPRESSOR"/>
    <property type="match status" value="1"/>
</dbReference>
<dbReference type="PANTHER" id="PTHR38025:SF1">
    <property type="entry name" value="TRP OPERON REPRESSOR"/>
    <property type="match status" value="1"/>
</dbReference>
<dbReference type="Pfam" id="PF01371">
    <property type="entry name" value="Trp_repressor"/>
    <property type="match status" value="1"/>
</dbReference>
<dbReference type="PIRSF" id="PIRSF003196">
    <property type="entry name" value="Trp_repressor"/>
    <property type="match status" value="1"/>
</dbReference>
<dbReference type="SUPFAM" id="SSF48295">
    <property type="entry name" value="TrpR-like"/>
    <property type="match status" value="1"/>
</dbReference>
<sequence length="109" mass="12399">MTQQSPYSAAVAEQRHQEWLRFVALLQQAYAEDLHLPLLQLMLTPDEREALGTRVRIIEELLRGEMSQRELKNELGAGIATITRGSNSLKSAPAELRQWLEQTLLTSDK</sequence>
<organism>
    <name type="scientific">Klebsiella pneumoniae (strain 342)</name>
    <dbReference type="NCBI Taxonomy" id="507522"/>
    <lineage>
        <taxon>Bacteria</taxon>
        <taxon>Pseudomonadati</taxon>
        <taxon>Pseudomonadota</taxon>
        <taxon>Gammaproteobacteria</taxon>
        <taxon>Enterobacterales</taxon>
        <taxon>Enterobacteriaceae</taxon>
        <taxon>Klebsiella/Raoultella group</taxon>
        <taxon>Klebsiella</taxon>
        <taxon>Klebsiella pneumoniae complex</taxon>
    </lineage>
</organism>
<reference key="1">
    <citation type="journal article" date="2008" name="PLoS Genet.">
        <title>Complete genome sequence of the N2-fixing broad host range endophyte Klebsiella pneumoniae 342 and virulence predictions verified in mice.</title>
        <authorList>
            <person name="Fouts D.E."/>
            <person name="Tyler H.L."/>
            <person name="DeBoy R.T."/>
            <person name="Daugherty S."/>
            <person name="Ren Q."/>
            <person name="Badger J.H."/>
            <person name="Durkin A.S."/>
            <person name="Huot H."/>
            <person name="Shrivastava S."/>
            <person name="Kothari S."/>
            <person name="Dodson R.J."/>
            <person name="Mohamoud Y."/>
            <person name="Khouri H."/>
            <person name="Roesch L.F.W."/>
            <person name="Krogfelt K.A."/>
            <person name="Struve C."/>
            <person name="Triplett E.W."/>
            <person name="Methe B.A."/>
        </authorList>
    </citation>
    <scope>NUCLEOTIDE SEQUENCE [LARGE SCALE GENOMIC DNA]</scope>
    <source>
        <strain>342</strain>
    </source>
</reference>